<keyword id="KW-0217">Developmental protein</keyword>
<keyword id="KW-0221">Differentiation</keyword>
<keyword id="KW-0238">DNA-binding</keyword>
<keyword id="KW-0479">Metal-binding</keyword>
<keyword id="KW-0524">Neurogenesis</keyword>
<keyword id="KW-0539">Nucleus</keyword>
<keyword id="KW-0597">Phosphoprotein</keyword>
<keyword id="KW-1267">Proteomics identification</keyword>
<keyword id="KW-1185">Reference proteome</keyword>
<keyword id="KW-0677">Repeat</keyword>
<keyword id="KW-0862">Zinc</keyword>
<keyword id="KW-0863">Zinc-finger</keyword>
<proteinExistence type="evidence at protein level"/>
<feature type="chain" id="PRO_0000047255" description="Zinc finger protein ZIC 5">
    <location>
        <begin position="1"/>
        <end position="639"/>
    </location>
</feature>
<feature type="zinc finger region" description="C2H2-type 1; atypical" evidence="3">
    <location>
        <begin position="434"/>
        <end position="461"/>
    </location>
</feature>
<feature type="zinc finger region" description="C2H2-type 2" evidence="3">
    <location>
        <begin position="467"/>
        <end position="491"/>
    </location>
</feature>
<feature type="zinc finger region" description="C2H2-type 3" evidence="3">
    <location>
        <begin position="497"/>
        <end position="521"/>
    </location>
</feature>
<feature type="zinc finger region" description="C2H2-type 4" evidence="3">
    <location>
        <begin position="527"/>
        <end position="551"/>
    </location>
</feature>
<feature type="region of interest" description="Disordered" evidence="4">
    <location>
        <begin position="113"/>
        <end position="171"/>
    </location>
</feature>
<feature type="region of interest" description="Disordered" evidence="4">
    <location>
        <begin position="189"/>
        <end position="251"/>
    </location>
</feature>
<feature type="region of interest" description="Disordered" evidence="4">
    <location>
        <begin position="323"/>
        <end position="355"/>
    </location>
</feature>
<feature type="region of interest" description="Disordered" evidence="4">
    <location>
        <begin position="379"/>
        <end position="409"/>
    </location>
</feature>
<feature type="region of interest" description="Disordered" evidence="4">
    <location>
        <begin position="548"/>
        <end position="568"/>
    </location>
</feature>
<feature type="region of interest" description="Disordered" evidence="4">
    <location>
        <begin position="607"/>
        <end position="639"/>
    </location>
</feature>
<feature type="compositionally biased region" description="Pro residues" evidence="4">
    <location>
        <begin position="124"/>
        <end position="150"/>
    </location>
</feature>
<feature type="compositionally biased region" description="Pro residues" evidence="4">
    <location>
        <begin position="331"/>
        <end position="343"/>
    </location>
</feature>
<feature type="compositionally biased region" description="Pro residues" evidence="4">
    <location>
        <begin position="385"/>
        <end position="401"/>
    </location>
</feature>
<feature type="compositionally biased region" description="Polar residues" evidence="4">
    <location>
        <begin position="612"/>
        <end position="621"/>
    </location>
</feature>
<feature type="modified residue" description="Phosphoserine" evidence="2">
    <location>
        <position position="554"/>
    </location>
</feature>
<feature type="modified residue" description="Phosphoserine" evidence="2">
    <location>
        <position position="558"/>
    </location>
</feature>
<feature type="modified residue" description="Phosphoserine" evidence="7 8">
    <location>
        <position position="576"/>
    </location>
</feature>
<feature type="sequence variant" id="VAR_079268" evidence="5">
    <location>
        <begin position="386"/>
        <end position="390"/>
    </location>
</feature>
<feature type="sequence variant" id="VAR_079269" description="In dbSNP:rs201876139." evidence="5">
    <original>S</original>
    <variation>F</variation>
    <location>
        <position position="586"/>
    </location>
</feature>
<evidence type="ECO:0000250" key="1"/>
<evidence type="ECO:0000250" key="2">
    <source>
        <dbReference type="UniProtKB" id="Q7TQ40"/>
    </source>
</evidence>
<evidence type="ECO:0000255" key="3">
    <source>
        <dbReference type="PROSITE-ProRule" id="PRU00042"/>
    </source>
</evidence>
<evidence type="ECO:0000256" key="4">
    <source>
        <dbReference type="SAM" id="MobiDB-lite"/>
    </source>
</evidence>
<evidence type="ECO:0000269" key="5">
    <source>
    </source>
</evidence>
<evidence type="ECO:0000305" key="6"/>
<evidence type="ECO:0007744" key="7">
    <source>
    </source>
</evidence>
<evidence type="ECO:0007744" key="8">
    <source>
    </source>
</evidence>
<dbReference type="EMBL" id="AF378304">
    <property type="protein sequence ID" value="AAK55418.1"/>
    <property type="molecule type" value="mRNA"/>
</dbReference>
<dbReference type="EMBL" id="AL355338">
    <property type="status" value="NOT_ANNOTATED_CDS"/>
    <property type="molecule type" value="Genomic_DNA"/>
</dbReference>
<dbReference type="CCDS" id="CCDS9494.3"/>
<dbReference type="RefSeq" id="NP_149123.3">
    <property type="nucleotide sequence ID" value="NM_033132.5"/>
</dbReference>
<dbReference type="SMR" id="Q96T25"/>
<dbReference type="BioGRID" id="124522">
    <property type="interactions" value="5"/>
</dbReference>
<dbReference type="FunCoup" id="Q96T25">
    <property type="interactions" value="752"/>
</dbReference>
<dbReference type="IntAct" id="Q96T25">
    <property type="interactions" value="1"/>
</dbReference>
<dbReference type="MINT" id="Q96T25"/>
<dbReference type="STRING" id="9606.ENSP00000267294"/>
<dbReference type="GlyGen" id="Q96T25">
    <property type="glycosylation" value="1 site"/>
</dbReference>
<dbReference type="iPTMnet" id="Q96T25"/>
<dbReference type="PhosphoSitePlus" id="Q96T25"/>
<dbReference type="BioMuta" id="ZIC5"/>
<dbReference type="DMDM" id="327478546"/>
<dbReference type="jPOST" id="Q96T25"/>
<dbReference type="MassIVE" id="Q96T25"/>
<dbReference type="PaxDb" id="9606-ENSP00000267294"/>
<dbReference type="PeptideAtlas" id="Q96T25"/>
<dbReference type="ProteomicsDB" id="78178"/>
<dbReference type="Pumba" id="Q96T25"/>
<dbReference type="Antibodypedia" id="10971">
    <property type="antibodies" value="109 antibodies from 25 providers"/>
</dbReference>
<dbReference type="DNASU" id="85416"/>
<dbReference type="Ensembl" id="ENST00000267294.5">
    <property type="protein sequence ID" value="ENSP00000267294.4"/>
    <property type="gene ID" value="ENSG00000139800.9"/>
</dbReference>
<dbReference type="GeneID" id="85416"/>
<dbReference type="KEGG" id="hsa:85416"/>
<dbReference type="MANE-Select" id="ENST00000267294.5">
    <property type="protein sequence ID" value="ENSP00000267294.4"/>
    <property type="RefSeq nucleotide sequence ID" value="NM_033132.5"/>
    <property type="RefSeq protein sequence ID" value="NP_149123.3"/>
</dbReference>
<dbReference type="UCSC" id="uc001vom.2">
    <property type="organism name" value="human"/>
</dbReference>
<dbReference type="AGR" id="HGNC:20322"/>
<dbReference type="CTD" id="85416"/>
<dbReference type="DisGeNET" id="85416"/>
<dbReference type="GeneCards" id="ZIC5"/>
<dbReference type="HGNC" id="HGNC:20322">
    <property type="gene designation" value="ZIC5"/>
</dbReference>
<dbReference type="HPA" id="ENSG00000139800">
    <property type="expression patterns" value="Tissue enriched (brain)"/>
</dbReference>
<dbReference type="MIM" id="617896">
    <property type="type" value="gene"/>
</dbReference>
<dbReference type="neXtProt" id="NX_Q96T25"/>
<dbReference type="OpenTargets" id="ENSG00000139800"/>
<dbReference type="PharmGKB" id="PA134941698"/>
<dbReference type="VEuPathDB" id="HostDB:ENSG00000139800"/>
<dbReference type="eggNOG" id="KOG1721">
    <property type="taxonomic scope" value="Eukaryota"/>
</dbReference>
<dbReference type="GeneTree" id="ENSGT00940000154200"/>
<dbReference type="HOGENOM" id="CLU_002678_37_3_1"/>
<dbReference type="InParanoid" id="Q96T25"/>
<dbReference type="OrthoDB" id="3214149at2759"/>
<dbReference type="PAN-GO" id="Q96T25">
    <property type="GO annotations" value="5 GO annotations based on evolutionary models"/>
</dbReference>
<dbReference type="PhylomeDB" id="Q96T25"/>
<dbReference type="TreeFam" id="TF351425"/>
<dbReference type="PathwayCommons" id="Q96T25"/>
<dbReference type="SignaLink" id="Q96T25"/>
<dbReference type="BioGRID-ORCS" id="85416">
    <property type="hits" value="6 hits in 1181 CRISPR screens"/>
</dbReference>
<dbReference type="ChiTaRS" id="ZIC5">
    <property type="organism name" value="human"/>
</dbReference>
<dbReference type="GenomeRNAi" id="85416"/>
<dbReference type="Pharos" id="Q96T25">
    <property type="development level" value="Tbio"/>
</dbReference>
<dbReference type="PRO" id="PR:Q96T25"/>
<dbReference type="Proteomes" id="UP000005640">
    <property type="component" value="Chromosome 13"/>
</dbReference>
<dbReference type="RNAct" id="Q96T25">
    <property type="molecule type" value="protein"/>
</dbReference>
<dbReference type="Bgee" id="ENSG00000139800">
    <property type="expression patterns" value="Expressed in right hemisphere of cerebellum and 40 other cell types or tissues"/>
</dbReference>
<dbReference type="GO" id="GO:0005634">
    <property type="term" value="C:nucleus"/>
    <property type="evidence" value="ECO:0000318"/>
    <property type="project" value="GO_Central"/>
</dbReference>
<dbReference type="GO" id="GO:0000981">
    <property type="term" value="F:DNA-binding transcription factor activity, RNA polymerase II-specific"/>
    <property type="evidence" value="ECO:0000318"/>
    <property type="project" value="GO_Central"/>
</dbReference>
<dbReference type="GO" id="GO:0000978">
    <property type="term" value="F:RNA polymerase II cis-regulatory region sequence-specific DNA binding"/>
    <property type="evidence" value="ECO:0000318"/>
    <property type="project" value="GO_Central"/>
</dbReference>
<dbReference type="GO" id="GO:1990837">
    <property type="term" value="F:sequence-specific double-stranded DNA binding"/>
    <property type="evidence" value="ECO:0000314"/>
    <property type="project" value="ARUK-UCL"/>
</dbReference>
<dbReference type="GO" id="GO:0008270">
    <property type="term" value="F:zinc ion binding"/>
    <property type="evidence" value="ECO:0007669"/>
    <property type="project" value="UniProtKB-KW"/>
</dbReference>
<dbReference type="GO" id="GO:0030154">
    <property type="term" value="P:cell differentiation"/>
    <property type="evidence" value="ECO:0007669"/>
    <property type="project" value="UniProtKB-KW"/>
</dbReference>
<dbReference type="GO" id="GO:0007417">
    <property type="term" value="P:central nervous system development"/>
    <property type="evidence" value="ECO:0000318"/>
    <property type="project" value="GO_Central"/>
</dbReference>
<dbReference type="GO" id="GO:0006357">
    <property type="term" value="P:regulation of transcription by RNA polymerase II"/>
    <property type="evidence" value="ECO:0000318"/>
    <property type="project" value="GO_Central"/>
</dbReference>
<dbReference type="FunFam" id="3.30.160.60:FF:000035">
    <property type="entry name" value="Zinc finger protein ZIC 1"/>
    <property type="match status" value="1"/>
</dbReference>
<dbReference type="FunFam" id="3.30.160.60:FF:000039">
    <property type="entry name" value="Zinc finger protein ZIC 1"/>
    <property type="match status" value="1"/>
</dbReference>
<dbReference type="FunFam" id="3.30.160.60:FF:000041">
    <property type="entry name" value="Zinc finger protein ZIC 1"/>
    <property type="match status" value="1"/>
</dbReference>
<dbReference type="FunFam" id="3.30.160.60:FF:000050">
    <property type="entry name" value="zinc finger protein ZIC 1"/>
    <property type="match status" value="1"/>
</dbReference>
<dbReference type="Gene3D" id="3.30.160.60">
    <property type="entry name" value="Classic Zinc Finger"/>
    <property type="match status" value="4"/>
</dbReference>
<dbReference type="InterPro" id="IPR043359">
    <property type="entry name" value="GLI-like"/>
</dbReference>
<dbReference type="InterPro" id="IPR056436">
    <property type="entry name" value="Znf-C2H2_ZIC1-5/GLI1-3-like"/>
</dbReference>
<dbReference type="InterPro" id="IPR036236">
    <property type="entry name" value="Znf_C2H2_sf"/>
</dbReference>
<dbReference type="InterPro" id="IPR013087">
    <property type="entry name" value="Znf_C2H2_type"/>
</dbReference>
<dbReference type="InterPro" id="IPR041643">
    <property type="entry name" value="Znf_ZIC"/>
</dbReference>
<dbReference type="PANTHER" id="PTHR45718">
    <property type="entry name" value="TRANSCRIPTIONAL ACTIVATOR CUBITUS INTERRUPTUS"/>
    <property type="match status" value="1"/>
</dbReference>
<dbReference type="PANTHER" id="PTHR45718:SF4">
    <property type="entry name" value="TRANSCRIPTIONAL ACTIVATOR CUBITUS INTERRUPTUS"/>
    <property type="match status" value="1"/>
</dbReference>
<dbReference type="Pfam" id="PF00096">
    <property type="entry name" value="zf-C2H2"/>
    <property type="match status" value="2"/>
</dbReference>
<dbReference type="Pfam" id="PF23561">
    <property type="entry name" value="zf-C2H2_15"/>
    <property type="match status" value="1"/>
</dbReference>
<dbReference type="Pfam" id="PF18366">
    <property type="entry name" value="zf_ZIC"/>
    <property type="match status" value="1"/>
</dbReference>
<dbReference type="SMART" id="SM00355">
    <property type="entry name" value="ZnF_C2H2"/>
    <property type="match status" value="5"/>
</dbReference>
<dbReference type="SUPFAM" id="SSF57667">
    <property type="entry name" value="beta-beta-alpha zinc fingers"/>
    <property type="match status" value="2"/>
</dbReference>
<dbReference type="PROSITE" id="PS00028">
    <property type="entry name" value="ZINC_FINGER_C2H2_1"/>
    <property type="match status" value="3"/>
</dbReference>
<dbReference type="PROSITE" id="PS50157">
    <property type="entry name" value="ZINC_FINGER_C2H2_2"/>
    <property type="match status" value="4"/>
</dbReference>
<comment type="function">
    <text evidence="1">Essential for neural crest development, converting cells from an epidermal fate to a neural crest cell fate. Binds to DNA (By similarity).</text>
</comment>
<comment type="subcellular location">
    <subcellularLocation>
        <location evidence="1">Nucleus</location>
    </subcellularLocation>
</comment>
<comment type="similarity">
    <text evidence="6">Belongs to the GLI C2H2-type zinc-finger protein family.</text>
</comment>
<accession>Q96T25</accession>
<accession>Q5VYB0</accession>
<sequence>MEPPLSKRNPPALRLADLATAQVQPLQNMTGFPALAGPPAHSQLRAAVAHLRLRDLGADPGVATTPLGPEHMAQASTLGLSPPSQAFPAHPEAPAAAARAAALVAHPGAGSYPCGGGSSGAQPSAPPPPAPPLPPTPSPPPPPPPPPPPALSGYTTTNSGGGGSSGKGHSRDFVLRRDLSATAPAAAMHGAPLGGEQRSGTGSPQHPAPPPHSAGMFISASGTYAGPDGSGGPALFPALHDTPGAPGGHPHPLNGQMRLGLAAAAAAAAAELYGRAEPPFAPRSGDAHYGAVAAAAAAALHGYGAVNLNLNLAAAAAAAAAGPGPHLQHHAPPPAPPPPPAPAQHPHQHHPHLPGAAGAFLRYMRQPIKQELICKWIDPDELAGLPPPPPPPPPPPPPPPAGGAKPCSKTFGTMHELVNHVTVEHVGGPEQSSHVCFWEDCPREGKPFKAKYKLINHIRVHTGEKPFPCPFPGCGKVFARSENLKIHKRTHTGEKPFKCEFDGCDRKFANSSDRKKHSHVHTSDKPYYCKIRGCDKSYTHPSSLRKHMKIHCKSPPPSPGPLGYSSVGTPVGAPLSPVLDPARSHSSTLSPQVTNLNEWYVCQASGAPSHLHTPSSNGTTSETEDEEIYGNPEVVRTIH</sequence>
<organism>
    <name type="scientific">Homo sapiens</name>
    <name type="common">Human</name>
    <dbReference type="NCBI Taxonomy" id="9606"/>
    <lineage>
        <taxon>Eukaryota</taxon>
        <taxon>Metazoa</taxon>
        <taxon>Chordata</taxon>
        <taxon>Craniata</taxon>
        <taxon>Vertebrata</taxon>
        <taxon>Euteleostomi</taxon>
        <taxon>Mammalia</taxon>
        <taxon>Eutheria</taxon>
        <taxon>Euarchontoglires</taxon>
        <taxon>Primates</taxon>
        <taxon>Haplorrhini</taxon>
        <taxon>Catarrhini</taxon>
        <taxon>Hominidae</taxon>
        <taxon>Homo</taxon>
    </lineage>
</organism>
<gene>
    <name type="primary">ZIC5</name>
</gene>
<reference key="1">
    <citation type="submission" date="2001-05" db="EMBL/GenBank/DDBJ databases">
        <title>A novel human zinc finger gene, hZic5.</title>
        <authorList>
            <person name="Gou D.M."/>
            <person name="Li W.X."/>
            <person name="Gao L."/>
            <person name="Sun Y."/>
        </authorList>
    </citation>
    <scope>NUCLEOTIDE SEQUENCE [MRNA]</scope>
</reference>
<reference key="2">
    <citation type="journal article" date="2004" name="Nature">
        <title>The DNA sequence and analysis of human chromosome 13.</title>
        <authorList>
            <person name="Dunham A."/>
            <person name="Matthews L.H."/>
            <person name="Burton J."/>
            <person name="Ashurst J.L."/>
            <person name="Howe K.L."/>
            <person name="Ashcroft K.J."/>
            <person name="Beare D.M."/>
            <person name="Burford D.C."/>
            <person name="Hunt S.E."/>
            <person name="Griffiths-Jones S."/>
            <person name="Jones M.C."/>
            <person name="Keenan S.J."/>
            <person name="Oliver K."/>
            <person name="Scott C.E."/>
            <person name="Ainscough R."/>
            <person name="Almeida J.P."/>
            <person name="Ambrose K.D."/>
            <person name="Andrews D.T."/>
            <person name="Ashwell R.I.S."/>
            <person name="Babbage A.K."/>
            <person name="Bagguley C.L."/>
            <person name="Bailey J."/>
            <person name="Bannerjee R."/>
            <person name="Barlow K.F."/>
            <person name="Bates K."/>
            <person name="Beasley H."/>
            <person name="Bird C.P."/>
            <person name="Bray-Allen S."/>
            <person name="Brown A.J."/>
            <person name="Brown J.Y."/>
            <person name="Burrill W."/>
            <person name="Carder C."/>
            <person name="Carter N.P."/>
            <person name="Chapman J.C."/>
            <person name="Clamp M.E."/>
            <person name="Clark S.Y."/>
            <person name="Clarke G."/>
            <person name="Clee C.M."/>
            <person name="Clegg S.C."/>
            <person name="Cobley V."/>
            <person name="Collins J.E."/>
            <person name="Corby N."/>
            <person name="Coville G.J."/>
            <person name="Deloukas P."/>
            <person name="Dhami P."/>
            <person name="Dunham I."/>
            <person name="Dunn M."/>
            <person name="Earthrowl M.E."/>
            <person name="Ellington A.G."/>
            <person name="Faulkner L."/>
            <person name="Frankish A.G."/>
            <person name="Frankland J."/>
            <person name="French L."/>
            <person name="Garner P."/>
            <person name="Garnett J."/>
            <person name="Gilbert J.G.R."/>
            <person name="Gilson C.J."/>
            <person name="Ghori J."/>
            <person name="Grafham D.V."/>
            <person name="Gribble S.M."/>
            <person name="Griffiths C."/>
            <person name="Hall R.E."/>
            <person name="Hammond S."/>
            <person name="Harley J.L."/>
            <person name="Hart E.A."/>
            <person name="Heath P.D."/>
            <person name="Howden P.J."/>
            <person name="Huckle E.J."/>
            <person name="Hunt P.J."/>
            <person name="Hunt A.R."/>
            <person name="Johnson C."/>
            <person name="Johnson D."/>
            <person name="Kay M."/>
            <person name="Kimberley A.M."/>
            <person name="King A."/>
            <person name="Laird G.K."/>
            <person name="Langford C.J."/>
            <person name="Lawlor S."/>
            <person name="Leongamornlert D.A."/>
            <person name="Lloyd D.M."/>
            <person name="Lloyd C."/>
            <person name="Loveland J.E."/>
            <person name="Lovell J."/>
            <person name="Martin S."/>
            <person name="Mashreghi-Mohammadi M."/>
            <person name="McLaren S.J."/>
            <person name="McMurray A."/>
            <person name="Milne S."/>
            <person name="Moore M.J.F."/>
            <person name="Nickerson T."/>
            <person name="Palmer S.A."/>
            <person name="Pearce A.V."/>
            <person name="Peck A.I."/>
            <person name="Pelan S."/>
            <person name="Phillimore B."/>
            <person name="Porter K.M."/>
            <person name="Rice C.M."/>
            <person name="Searle S."/>
            <person name="Sehra H.K."/>
            <person name="Shownkeen R."/>
            <person name="Skuce C.D."/>
            <person name="Smith M."/>
            <person name="Steward C.A."/>
            <person name="Sycamore N."/>
            <person name="Tester J."/>
            <person name="Thomas D.W."/>
            <person name="Tracey A."/>
            <person name="Tromans A."/>
            <person name="Tubby B."/>
            <person name="Wall M."/>
            <person name="Wallis J.M."/>
            <person name="West A.P."/>
            <person name="Whitehead S.L."/>
            <person name="Willey D.L."/>
            <person name="Wilming L."/>
            <person name="Wray P.W."/>
            <person name="Wright M.W."/>
            <person name="Young L."/>
            <person name="Coulson A."/>
            <person name="Durbin R.M."/>
            <person name="Hubbard T."/>
            <person name="Sulston J.E."/>
            <person name="Beck S."/>
            <person name="Bentley D.R."/>
            <person name="Rogers J."/>
            <person name="Ross M.T."/>
        </authorList>
    </citation>
    <scope>NUCLEOTIDE SEQUENCE [LARGE SCALE GENOMIC DNA]</scope>
</reference>
<reference key="3">
    <citation type="journal article" date="2008" name="Proc. Natl. Acad. Sci. U.S.A.">
        <title>A quantitative atlas of mitotic phosphorylation.</title>
        <authorList>
            <person name="Dephoure N."/>
            <person name="Zhou C."/>
            <person name="Villen J."/>
            <person name="Beausoleil S.A."/>
            <person name="Bakalarski C.E."/>
            <person name="Elledge S.J."/>
            <person name="Gygi S.P."/>
        </authorList>
    </citation>
    <scope>PHOSPHORYLATION [LARGE SCALE ANALYSIS] AT SER-576</scope>
    <scope>IDENTIFICATION BY MASS SPECTROMETRY [LARGE SCALE ANALYSIS]</scope>
    <source>
        <tissue>Cervix carcinoma</tissue>
    </source>
</reference>
<reference key="4">
    <citation type="journal article" date="2011" name="Sci. Signal.">
        <title>System-wide temporal characterization of the proteome and phosphoproteome of human embryonic stem cell differentiation.</title>
        <authorList>
            <person name="Rigbolt K.T."/>
            <person name="Prokhorova T.A."/>
            <person name="Akimov V."/>
            <person name="Henningsen J."/>
            <person name="Johansen P.T."/>
            <person name="Kratchmarova I."/>
            <person name="Kassem M."/>
            <person name="Mann M."/>
            <person name="Olsen J.V."/>
            <person name="Blagoev B."/>
        </authorList>
    </citation>
    <scope>PHOSPHORYLATION [LARGE SCALE ANALYSIS] AT SER-576</scope>
    <scope>IDENTIFICATION BY MASS SPECTROMETRY [LARGE SCALE ANALYSIS]</scope>
</reference>
<reference key="5">
    <citation type="journal article" date="2017" name="J. Am. Soc. Nephrol.">
        <title>MAGI2 mutations cause congenital nephrotic syndrome.</title>
        <authorList>
            <consortium name="NephroS"/>
            <consortium name="UK study of Nephrotic Syndrome"/>
            <person name="Bierzynska A."/>
            <person name="Soderquest K."/>
            <person name="Dean P."/>
            <person name="Colby E."/>
            <person name="Rollason R."/>
            <person name="Jones C."/>
            <person name="Inward C.D."/>
            <person name="McCarthy H.J."/>
            <person name="Simpson M.A."/>
            <person name="Lord G.M."/>
            <person name="Williams M."/>
            <person name="Welsh G.I."/>
            <person name="Koziell A.B."/>
            <person name="Saleem M.A."/>
        </authorList>
    </citation>
    <scope>VARIANTS 386-PRO--PRO-390 DEL AND PHE-586</scope>
</reference>
<protein>
    <recommendedName>
        <fullName>Zinc finger protein ZIC 5</fullName>
    </recommendedName>
    <alternativeName>
        <fullName>Zinc finger protein of the cerebellum 5</fullName>
    </alternativeName>
</protein>
<name>ZIC5_HUMAN</name>